<sequence>MSEPDDVDTVKERLAEDRQNIHIQNEYQDISYTIIKARIGMLATAIGGPDHSVDSVNPPYKVGDDCLACIKDLIRWFKLVDDNQKRWDVEMATAEFKILQNDLIPILLDWEAKNSAATRKSKKTGEDISIFFPNKSYHDRIALGALQLMVLMTWPLIITDQSSYNQVNYYFELKKHQLLYKHAILTTENGKVLKAAIRLALNVMSVDVDHRTARDDSLIRMVLNFLKNVVAIEPGEVTISSVKRLKRPLTMAEMLPTNITVDDISINSVITAFDKNKVFGFLLTVASSLSDAVDPNFVSWPLLEVMFFLTKDINPIRLFKNQRKSYKLGTDHEITDSNMTTSGKHLSELLAKEHEKKLNVIKNTSSRHSRFGGLLSIQTPQNTRLTIASNSVNMRDDAALQELDSRKKWNKTITMRLDVIEGLSSSFFSTEGNSIYMSSDNITSIKEFLADFVDSSFNLLLQNATDSFTSEIQDQLPLHKIEYMLFISWFVKFQRSRCIYEIDATPDYVSGALLDECYILFTKYLRESYEQKNWPVVHAGMLLFTEYLEFLLSLDQSWEADVQAVISKILSENMLQLLASLPKSATSHSSQYVKACINLTHVVLKTIDKFDENSSLTVESKRKRKVNLNHTAIEKYAKDNDLDYESAFDILEEQFKQVTINFDKVFRGYLTEPTISTYIRYLQSYKELEDKDLIRVLKFFQRVFVKAKEELFLFRIDFMILCREILSQQGLPTTSELRTHFTKFNEYYLKQLKNKLKKMPSLYINILFPMLHDSQISYYMRHGKMKLTEGTPDIVLPSTFINIPDEGSLPKKVLLDMQVGILVSSLIDDGYEDLIEALLLNLQSSFDGLKGKVAEGINSLEEERVKKVAFNATNSEIKRALYQQPEFRRLLILAGFAIPEANQPACYFINNKTPTEVQLVIETIQKHRSLPFESEIGKPASYYLSSHYQEYEDPEEYGSDLNNGSYFEDLEIMDKRTEGRELSKGKAQSKLVQRSKGKRKAIAHHPEENESDFEANASSSTKLPVVSKEYIMDSDDEDPDFGAIFFENETYLRQLLDKHNGSLTETQFSLFAQFCEERVKNNGQLRNDYSALFNETPKSPIFSDVDAETIIIGSASLPSLANEPIETQVVSSEEYSSHPLEEEVTSEQRKRKKPRIESDTEY</sequence>
<keyword id="KW-0131">Cell cycle</keyword>
<keyword id="KW-0227">DNA damage</keyword>
<keyword id="KW-0234">DNA repair</keyword>
<keyword id="KW-0236">DNA replication inhibitor</keyword>
<keyword id="KW-0469">Meiosis</keyword>
<keyword id="KW-0539">Nucleus</keyword>
<keyword id="KW-1185">Reference proteome</keyword>
<proteinExistence type="inferred from homology"/>
<protein>
    <recommendedName>
        <fullName>Topoisomerase 1-associated factor 1</fullName>
    </recommendedName>
</protein>
<reference key="1">
    <citation type="journal article" date="2004" name="Nature">
        <title>Genome evolution in yeasts.</title>
        <authorList>
            <person name="Dujon B."/>
            <person name="Sherman D."/>
            <person name="Fischer G."/>
            <person name="Durrens P."/>
            <person name="Casaregola S."/>
            <person name="Lafontaine I."/>
            <person name="de Montigny J."/>
            <person name="Marck C."/>
            <person name="Neuveglise C."/>
            <person name="Talla E."/>
            <person name="Goffard N."/>
            <person name="Frangeul L."/>
            <person name="Aigle M."/>
            <person name="Anthouard V."/>
            <person name="Babour A."/>
            <person name="Barbe V."/>
            <person name="Barnay S."/>
            <person name="Blanchin S."/>
            <person name="Beckerich J.-M."/>
            <person name="Beyne E."/>
            <person name="Bleykasten C."/>
            <person name="Boisrame A."/>
            <person name="Boyer J."/>
            <person name="Cattolico L."/>
            <person name="Confanioleri F."/>
            <person name="de Daruvar A."/>
            <person name="Despons L."/>
            <person name="Fabre E."/>
            <person name="Fairhead C."/>
            <person name="Ferry-Dumazet H."/>
            <person name="Groppi A."/>
            <person name="Hantraye F."/>
            <person name="Hennequin C."/>
            <person name="Jauniaux N."/>
            <person name="Joyet P."/>
            <person name="Kachouri R."/>
            <person name="Kerrest A."/>
            <person name="Koszul R."/>
            <person name="Lemaire M."/>
            <person name="Lesur I."/>
            <person name="Ma L."/>
            <person name="Muller H."/>
            <person name="Nicaud J.-M."/>
            <person name="Nikolski M."/>
            <person name="Oztas S."/>
            <person name="Ozier-Kalogeropoulos O."/>
            <person name="Pellenz S."/>
            <person name="Potier S."/>
            <person name="Richard G.-F."/>
            <person name="Straub M.-L."/>
            <person name="Suleau A."/>
            <person name="Swennen D."/>
            <person name="Tekaia F."/>
            <person name="Wesolowski-Louvel M."/>
            <person name="Westhof E."/>
            <person name="Wirth B."/>
            <person name="Zeniou-Meyer M."/>
            <person name="Zivanovic Y."/>
            <person name="Bolotin-Fukuhara M."/>
            <person name="Thierry A."/>
            <person name="Bouchier C."/>
            <person name="Caudron B."/>
            <person name="Scarpelli C."/>
            <person name="Gaillardin C."/>
            <person name="Weissenbach J."/>
            <person name="Wincker P."/>
            <person name="Souciet J.-L."/>
        </authorList>
    </citation>
    <scope>NUCLEOTIDE SEQUENCE [LARGE SCALE GENOMIC DNA]</scope>
    <source>
        <strain>ATCC 8585 / CBS 2359 / DSM 70799 / NBRC 1267 / NRRL Y-1140 / WM37</strain>
    </source>
</reference>
<name>TOF1_KLULA</name>
<feature type="chain" id="PRO_0000301740" description="Topoisomerase 1-associated factor 1">
    <location>
        <begin position="1"/>
        <end position="1162"/>
    </location>
</feature>
<feature type="region of interest" description="Disordered" evidence="2">
    <location>
        <begin position="977"/>
        <end position="1017"/>
    </location>
</feature>
<feature type="region of interest" description="Disordered" evidence="2">
    <location>
        <begin position="1127"/>
        <end position="1162"/>
    </location>
</feature>
<feature type="compositionally biased region" description="Basic residues" evidence="2">
    <location>
        <begin position="993"/>
        <end position="1003"/>
    </location>
</feature>
<accession>Q6CUU2</accession>
<gene>
    <name type="primary">TOF1</name>
    <name type="ordered locus">KLLA0C02255g</name>
</gene>
<comment type="function">
    <text evidence="1">Forms a fork protection complex (FPC) with CSM3 and which is required for chromosome segregation during meiosis and DNA damage repair. FPC coordinates leading and lagging strand synthesis and moves with the replication fork. FPC stabilizes replication forks in a configuration that is recognized by replication checkpoint sensors (By similarity).</text>
</comment>
<comment type="subunit">
    <text evidence="1">Component of the fork protection complex (FPC) consisting of TOF1 and CSM3.</text>
</comment>
<comment type="subcellular location">
    <subcellularLocation>
        <location evidence="1">Nucleus</location>
    </subcellularLocation>
</comment>
<comment type="similarity">
    <text evidence="3">Belongs to the timeless family.</text>
</comment>
<organism>
    <name type="scientific">Kluyveromyces lactis (strain ATCC 8585 / CBS 2359 / DSM 70799 / NBRC 1267 / NRRL Y-1140 / WM37)</name>
    <name type="common">Yeast</name>
    <name type="synonym">Candida sphaerica</name>
    <dbReference type="NCBI Taxonomy" id="284590"/>
    <lineage>
        <taxon>Eukaryota</taxon>
        <taxon>Fungi</taxon>
        <taxon>Dikarya</taxon>
        <taxon>Ascomycota</taxon>
        <taxon>Saccharomycotina</taxon>
        <taxon>Saccharomycetes</taxon>
        <taxon>Saccharomycetales</taxon>
        <taxon>Saccharomycetaceae</taxon>
        <taxon>Kluyveromyces</taxon>
    </lineage>
</organism>
<dbReference type="EMBL" id="CR382123">
    <property type="protein sequence ID" value="CAH01148.1"/>
    <property type="molecule type" value="Genomic_DNA"/>
</dbReference>
<dbReference type="RefSeq" id="XP_452297.1">
    <property type="nucleotide sequence ID" value="XM_452297.1"/>
</dbReference>
<dbReference type="SMR" id="Q6CUU2"/>
<dbReference type="FunCoup" id="Q6CUU2">
    <property type="interactions" value="77"/>
</dbReference>
<dbReference type="STRING" id="284590.Q6CUU2"/>
<dbReference type="PaxDb" id="284590-Q6CUU2"/>
<dbReference type="KEGG" id="kla:KLLA0_C02255g"/>
<dbReference type="eggNOG" id="KOG1974">
    <property type="taxonomic scope" value="Eukaryota"/>
</dbReference>
<dbReference type="HOGENOM" id="CLU_008440_0_0_1"/>
<dbReference type="InParanoid" id="Q6CUU2"/>
<dbReference type="OMA" id="VNHHRHT"/>
<dbReference type="Proteomes" id="UP000000598">
    <property type="component" value="Chromosome C"/>
</dbReference>
<dbReference type="GO" id="GO:0031298">
    <property type="term" value="C:replication fork protection complex"/>
    <property type="evidence" value="ECO:0007669"/>
    <property type="project" value="TreeGrafter"/>
</dbReference>
<dbReference type="GO" id="GO:0003677">
    <property type="term" value="F:DNA binding"/>
    <property type="evidence" value="ECO:0007669"/>
    <property type="project" value="TreeGrafter"/>
</dbReference>
<dbReference type="GO" id="GO:0006281">
    <property type="term" value="P:DNA repair"/>
    <property type="evidence" value="ECO:0007669"/>
    <property type="project" value="UniProtKB-KW"/>
</dbReference>
<dbReference type="GO" id="GO:0000076">
    <property type="term" value="P:DNA replication checkpoint signaling"/>
    <property type="evidence" value="ECO:0007669"/>
    <property type="project" value="TreeGrafter"/>
</dbReference>
<dbReference type="GO" id="GO:0051321">
    <property type="term" value="P:meiotic cell cycle"/>
    <property type="evidence" value="ECO:0007669"/>
    <property type="project" value="UniProtKB-KW"/>
</dbReference>
<dbReference type="GO" id="GO:0043111">
    <property type="term" value="P:replication fork arrest"/>
    <property type="evidence" value="ECO:0007669"/>
    <property type="project" value="TreeGrafter"/>
</dbReference>
<dbReference type="InterPro" id="IPR044998">
    <property type="entry name" value="Timeless"/>
</dbReference>
<dbReference type="InterPro" id="IPR006906">
    <property type="entry name" value="Timeless_N"/>
</dbReference>
<dbReference type="PANTHER" id="PTHR22940:SF4">
    <property type="entry name" value="PROTEIN TIMELESS HOMOLOG"/>
    <property type="match status" value="1"/>
</dbReference>
<dbReference type="PANTHER" id="PTHR22940">
    <property type="entry name" value="TIMEOUT/TIMELESS-2"/>
    <property type="match status" value="1"/>
</dbReference>
<dbReference type="Pfam" id="PF04821">
    <property type="entry name" value="TIMELESS"/>
    <property type="match status" value="1"/>
</dbReference>
<evidence type="ECO:0000250" key="1"/>
<evidence type="ECO:0000256" key="2">
    <source>
        <dbReference type="SAM" id="MobiDB-lite"/>
    </source>
</evidence>
<evidence type="ECO:0000305" key="3"/>